<accession>C4YEN2</accession>
<keyword id="KW-0539">Nucleus</keyword>
<keyword id="KW-0677">Repeat</keyword>
<keyword id="KW-0690">Ribosome biogenesis</keyword>
<keyword id="KW-0698">rRNA processing</keyword>
<name>NOP9_CANAW</name>
<sequence>MGKTKSRGRRAEKKNKKNEPGFNEDVSNLDSDVTITNQEPLSSSISSTSGIPNTFFGLVDNNELDYFKQAESTLNINAFETDEERQGFINSVLDEAQGKELKLVTNQICSKLMERLILFANHNQLKKIFKQFQNHFVSLAFHKYASHVLETLLVRSAALIEKELTQTDEEKLEKAEEEEAEENSLNNDVPMEDLFISMLNEFKPHLTTMIDHSYASHVLRLLILILAGKELPSSVTSNSTLRSKKSKIARKMIEIKDNEDFDRAFQTPQSFKNELREYCQTIIAGLDTKSARELSIHKIGSPVLQLLIQVEGLVDRERSFWHLIFAKDSEGKDSVEESFVEYLLSESVGSHFLESIIKNDGARPKYIERLYKLYMKDRVLKLAKRSTTGVYIIQALLFKLKPVEVEYILDQIIPELAELISIAENQNLDLANKLIDASISRGNYRRDEIINQLFIKFAPNYDIENPSDNTSTEFIENILQLTGSTLGNTRDDWPTAEERKRALFLEKLMEYDYKCVICTWFNFMALPIERFVQMCFHGVFCHVVEKALIVEPEEPKPIQILRKRLLNIFQGQIVGLACNSYGSHIVDSLWNFTVLLPMYKDRIASELLGDSHRVKESTYGRLVWKNWGMELFVRKKYDWKALIKQQEQEYYGETEDSTEKRTKKPIELKMERLAEEKRRQEEMAERAQSGYTKRKLEEATGTASEKKQKLRGRRR</sequence>
<feature type="chain" id="PRO_0000407804" description="Nucleolar protein 9">
    <location>
        <begin position="1"/>
        <end position="715"/>
    </location>
</feature>
<feature type="repeat" description="Pumilio 1">
    <location>
        <begin position="95"/>
        <end position="130"/>
    </location>
</feature>
<feature type="repeat" description="Pumilio 2">
    <location>
        <begin position="131"/>
        <end position="166"/>
    </location>
</feature>
<feature type="repeat" description="Pumilio 3">
    <location>
        <begin position="201"/>
        <end position="237"/>
    </location>
</feature>
<feature type="repeat" description="Pumilio 4">
    <location>
        <begin position="285"/>
        <end position="326"/>
    </location>
</feature>
<feature type="repeat" description="Pumilio 5">
    <location>
        <begin position="334"/>
        <end position="372"/>
    </location>
</feature>
<feature type="repeat" description="Pumilio 6">
    <location>
        <begin position="374"/>
        <end position="410"/>
    </location>
</feature>
<feature type="repeat" description="Pumilio 7">
    <location>
        <begin position="525"/>
        <end position="562"/>
    </location>
</feature>
<feature type="repeat" description="Pumilio 8">
    <location>
        <begin position="567"/>
        <end position="605"/>
    </location>
</feature>
<feature type="region of interest" description="Disordered" evidence="2">
    <location>
        <begin position="1"/>
        <end position="30"/>
    </location>
</feature>
<feature type="region of interest" description="Disordered" evidence="2">
    <location>
        <begin position="651"/>
        <end position="715"/>
    </location>
</feature>
<feature type="compositionally biased region" description="Basic residues" evidence="2">
    <location>
        <begin position="1"/>
        <end position="16"/>
    </location>
</feature>
<feature type="compositionally biased region" description="Basic and acidic residues" evidence="2">
    <location>
        <begin position="657"/>
        <end position="685"/>
    </location>
</feature>
<protein>
    <recommendedName>
        <fullName>Nucleolar protein 9</fullName>
    </recommendedName>
    <alternativeName>
        <fullName>Pumilio domain-containing protein NOP9</fullName>
    </alternativeName>
</protein>
<gene>
    <name type="primary">NOP9</name>
    <name type="ORF">CAWG_00989</name>
</gene>
<evidence type="ECO:0000250" key="1"/>
<evidence type="ECO:0000256" key="2">
    <source>
        <dbReference type="SAM" id="MobiDB-lite"/>
    </source>
</evidence>
<evidence type="ECO:0000305" key="3"/>
<dbReference type="EMBL" id="CH672346">
    <property type="protein sequence ID" value="EEQ42768.1"/>
    <property type="molecule type" value="Genomic_DNA"/>
</dbReference>
<dbReference type="SMR" id="C4YEN2"/>
<dbReference type="PaxDb" id="5476-C4YEN2"/>
<dbReference type="VEuPathDB" id="FungiDB:CAWG_00989"/>
<dbReference type="HOGENOM" id="CLU_008720_1_1_1"/>
<dbReference type="OMA" id="CNSYGSH"/>
<dbReference type="OrthoDB" id="6700at766764"/>
<dbReference type="Proteomes" id="UP000001429">
    <property type="component" value="Chromosome 1, Supercontig 1.1"/>
</dbReference>
<dbReference type="GO" id="GO:0030686">
    <property type="term" value="C:90S preribosome"/>
    <property type="evidence" value="ECO:0007669"/>
    <property type="project" value="TreeGrafter"/>
</dbReference>
<dbReference type="GO" id="GO:0005730">
    <property type="term" value="C:nucleolus"/>
    <property type="evidence" value="ECO:0007669"/>
    <property type="project" value="UniProtKB-SubCell"/>
</dbReference>
<dbReference type="GO" id="GO:0030688">
    <property type="term" value="C:preribosome, small subunit precursor"/>
    <property type="evidence" value="ECO:0007669"/>
    <property type="project" value="TreeGrafter"/>
</dbReference>
<dbReference type="GO" id="GO:0003723">
    <property type="term" value="F:RNA binding"/>
    <property type="evidence" value="ECO:0007669"/>
    <property type="project" value="InterPro"/>
</dbReference>
<dbReference type="GO" id="GO:0000480">
    <property type="term" value="P:endonucleolytic cleavage in 5'-ETS of tricistronic rRNA transcript (SSU-rRNA, 5.8S rRNA, LSU-rRNA)"/>
    <property type="evidence" value="ECO:0007669"/>
    <property type="project" value="TreeGrafter"/>
</dbReference>
<dbReference type="GO" id="GO:0000447">
    <property type="term" value="P:endonucleolytic cleavage in ITS1 to separate SSU-rRNA from 5.8S rRNA and LSU-rRNA from tricistronic rRNA transcript (SSU-rRNA, 5.8S rRNA, LSU-rRNA)"/>
    <property type="evidence" value="ECO:0007669"/>
    <property type="project" value="TreeGrafter"/>
</dbReference>
<dbReference type="GO" id="GO:0000472">
    <property type="term" value="P:endonucleolytic cleavage to generate mature 5'-end of SSU-rRNA from (SSU-rRNA, 5.8S rRNA, LSU-rRNA)"/>
    <property type="evidence" value="ECO:0007669"/>
    <property type="project" value="TreeGrafter"/>
</dbReference>
<dbReference type="GO" id="GO:0000056">
    <property type="term" value="P:ribosomal small subunit export from nucleus"/>
    <property type="evidence" value="ECO:0007669"/>
    <property type="project" value="TreeGrafter"/>
</dbReference>
<dbReference type="Gene3D" id="1.25.10.10">
    <property type="entry name" value="Leucine-rich Repeat Variant"/>
    <property type="match status" value="3"/>
</dbReference>
<dbReference type="InterPro" id="IPR011989">
    <property type="entry name" value="ARM-like"/>
</dbReference>
<dbReference type="InterPro" id="IPR016024">
    <property type="entry name" value="ARM-type_fold"/>
</dbReference>
<dbReference type="InterPro" id="IPR040000">
    <property type="entry name" value="NOP9"/>
</dbReference>
<dbReference type="InterPro" id="IPR001313">
    <property type="entry name" value="Pumilio_RNA-bd_rpt"/>
</dbReference>
<dbReference type="PANTHER" id="PTHR13102">
    <property type="entry name" value="NUCLEOLAR PROTEIN 9"/>
    <property type="match status" value="1"/>
</dbReference>
<dbReference type="PANTHER" id="PTHR13102:SF0">
    <property type="entry name" value="NUCLEOLAR PROTEIN 9"/>
    <property type="match status" value="1"/>
</dbReference>
<dbReference type="Pfam" id="PF22493">
    <property type="entry name" value="PUF_NOP9"/>
    <property type="match status" value="1"/>
</dbReference>
<dbReference type="SMART" id="SM00025">
    <property type="entry name" value="Pumilio"/>
    <property type="match status" value="8"/>
</dbReference>
<dbReference type="SUPFAM" id="SSF48371">
    <property type="entry name" value="ARM repeat"/>
    <property type="match status" value="1"/>
</dbReference>
<dbReference type="PROSITE" id="PS50302">
    <property type="entry name" value="PUM"/>
    <property type="match status" value="7"/>
</dbReference>
<organism>
    <name type="scientific">Candida albicans (strain WO-1)</name>
    <name type="common">Yeast</name>
    <dbReference type="NCBI Taxonomy" id="294748"/>
    <lineage>
        <taxon>Eukaryota</taxon>
        <taxon>Fungi</taxon>
        <taxon>Dikarya</taxon>
        <taxon>Ascomycota</taxon>
        <taxon>Saccharomycotina</taxon>
        <taxon>Pichiomycetes</taxon>
        <taxon>Debaryomycetaceae</taxon>
        <taxon>Candida/Lodderomyces clade</taxon>
        <taxon>Candida</taxon>
    </lineage>
</organism>
<reference key="1">
    <citation type="journal article" date="2009" name="Nature">
        <title>Evolution of pathogenicity and sexual reproduction in eight Candida genomes.</title>
        <authorList>
            <person name="Butler G."/>
            <person name="Rasmussen M.D."/>
            <person name="Lin M.F."/>
            <person name="Santos M.A.S."/>
            <person name="Sakthikumar S."/>
            <person name="Munro C.A."/>
            <person name="Rheinbay E."/>
            <person name="Grabherr M."/>
            <person name="Forche A."/>
            <person name="Reedy J.L."/>
            <person name="Agrafioti I."/>
            <person name="Arnaud M.B."/>
            <person name="Bates S."/>
            <person name="Brown A.J.P."/>
            <person name="Brunke S."/>
            <person name="Costanzo M.C."/>
            <person name="Fitzpatrick D.A."/>
            <person name="de Groot P.W.J."/>
            <person name="Harris D."/>
            <person name="Hoyer L.L."/>
            <person name="Hube B."/>
            <person name="Klis F.M."/>
            <person name="Kodira C."/>
            <person name="Lennard N."/>
            <person name="Logue M.E."/>
            <person name="Martin R."/>
            <person name="Neiman A.M."/>
            <person name="Nikolaou E."/>
            <person name="Quail M.A."/>
            <person name="Quinn J."/>
            <person name="Santos M.C."/>
            <person name="Schmitzberger F.F."/>
            <person name="Sherlock G."/>
            <person name="Shah P."/>
            <person name="Silverstein K.A.T."/>
            <person name="Skrzypek M.S."/>
            <person name="Soll D."/>
            <person name="Staggs R."/>
            <person name="Stansfield I."/>
            <person name="Stumpf M.P.H."/>
            <person name="Sudbery P.E."/>
            <person name="Srikantha T."/>
            <person name="Zeng Q."/>
            <person name="Berman J."/>
            <person name="Berriman M."/>
            <person name="Heitman J."/>
            <person name="Gow N.A.R."/>
            <person name="Lorenz M.C."/>
            <person name="Birren B.W."/>
            <person name="Kellis M."/>
            <person name="Cuomo C.A."/>
        </authorList>
    </citation>
    <scope>NUCLEOTIDE SEQUENCE [LARGE SCALE GENOMIC DNA]</scope>
    <source>
        <strain>WO-1</strain>
    </source>
</reference>
<proteinExistence type="inferred from homology"/>
<comment type="function">
    <text evidence="1">RNA-binding nucleolar protein required for pre-rRNA processing. Involved in production of 18S rRNA and assembly of small ribosomal subunit (By similarity).</text>
</comment>
<comment type="subcellular location">
    <subcellularLocation>
        <location evidence="1">Nucleus</location>
        <location evidence="1">Nucleolus</location>
    </subcellularLocation>
</comment>
<comment type="similarity">
    <text evidence="3">Belongs to the NOP9 family.</text>
</comment>